<gene>
    <name type="primary">hisH</name>
    <name type="ordered locus">aq_732</name>
</gene>
<evidence type="ECO:0000250" key="1"/>
<feature type="chain" id="PRO_0000152335" description="Imidazole glycerol phosphate synthase subunit HisH">
    <location>
        <begin position="1"/>
        <end position="207"/>
    </location>
</feature>
<feature type="domain" description="Glutamine amidotransferase type-1">
    <location>
        <begin position="2"/>
        <end position="207"/>
    </location>
</feature>
<feature type="active site" description="Nucleophile" evidence="1">
    <location>
        <position position="81"/>
    </location>
</feature>
<feature type="active site" evidence="1">
    <location>
        <position position="183"/>
    </location>
</feature>
<feature type="active site" evidence="1">
    <location>
        <position position="185"/>
    </location>
</feature>
<reference key="1">
    <citation type="journal article" date="1998" name="Nature">
        <title>The complete genome of the hyperthermophilic bacterium Aquifex aeolicus.</title>
        <authorList>
            <person name="Deckert G."/>
            <person name="Warren P.V."/>
            <person name="Gaasterland T."/>
            <person name="Young W.G."/>
            <person name="Lenox A.L."/>
            <person name="Graham D.E."/>
            <person name="Overbeek R."/>
            <person name="Snead M.A."/>
            <person name="Keller M."/>
            <person name="Aujay M."/>
            <person name="Huber R."/>
            <person name="Feldman R.A."/>
            <person name="Short J.M."/>
            <person name="Olsen G.J."/>
            <person name="Swanson R.V."/>
        </authorList>
    </citation>
    <scope>NUCLEOTIDE SEQUENCE [LARGE SCALE GENOMIC DNA]</scope>
    <source>
        <strain>VF5</strain>
    </source>
</reference>
<protein>
    <recommendedName>
        <fullName>Imidazole glycerol phosphate synthase subunit HisH</fullName>
        <ecNumber>4.3.2.10</ecNumber>
    </recommendedName>
    <alternativeName>
        <fullName>IGP synthase glutaminase subunit</fullName>
        <ecNumber>3.5.1.2</ecNumber>
    </alternativeName>
    <alternativeName>
        <fullName>IGP synthase subunit HisH</fullName>
    </alternativeName>
    <alternativeName>
        <fullName>ImGP synthase subunit HisH</fullName>
        <shortName>IGPS subunit HisH</shortName>
    </alternativeName>
</protein>
<sequence length="207" mass="23307">MRTVVIDYGMGNLRSVSKALEAVGFPEVVVSNDYRVASEADVLVLPGVGAFGDAMKNLEELNLVSVIRRHIEKGKPFLGICLGLQLLFEKSYEHGEHRGLGILKGEVILLPLGVKIPHIGWNQLWFKKESEILEGLKEGDFVYFVHSYRVVPEDESVVLTKTDYGEYFVSSIELDNVVAFQFHPEKSQKKGLKLLENFKRKAEKLTT</sequence>
<comment type="function">
    <text evidence="1">IGPS catalyzes the conversion of PRFAR and glutamine to IGP, AICAR and glutamate. The HisH subunit catalyzes the hydrolysis of glutamine to glutamate and ammonia as part of the synthesis of IGP and AICAR. The resulting ammonia molecule is channeled to the active site of HisF (By similarity).</text>
</comment>
<comment type="catalytic activity">
    <reaction>
        <text>5-[(5-phospho-1-deoxy-D-ribulos-1-ylimino)methylamino]-1-(5-phospho-beta-D-ribosyl)imidazole-4-carboxamide + L-glutamine = D-erythro-1-(imidazol-4-yl)glycerol 3-phosphate + 5-amino-1-(5-phospho-beta-D-ribosyl)imidazole-4-carboxamide + L-glutamate + H(+)</text>
        <dbReference type="Rhea" id="RHEA:24793"/>
        <dbReference type="ChEBI" id="CHEBI:15378"/>
        <dbReference type="ChEBI" id="CHEBI:29985"/>
        <dbReference type="ChEBI" id="CHEBI:58278"/>
        <dbReference type="ChEBI" id="CHEBI:58359"/>
        <dbReference type="ChEBI" id="CHEBI:58475"/>
        <dbReference type="ChEBI" id="CHEBI:58525"/>
        <dbReference type="EC" id="4.3.2.10"/>
    </reaction>
</comment>
<comment type="catalytic activity">
    <reaction>
        <text>L-glutamine + H2O = L-glutamate + NH4(+)</text>
        <dbReference type="Rhea" id="RHEA:15889"/>
        <dbReference type="ChEBI" id="CHEBI:15377"/>
        <dbReference type="ChEBI" id="CHEBI:28938"/>
        <dbReference type="ChEBI" id="CHEBI:29985"/>
        <dbReference type="ChEBI" id="CHEBI:58359"/>
        <dbReference type="EC" id="3.5.1.2"/>
    </reaction>
</comment>
<comment type="pathway">
    <text>Amino-acid biosynthesis; L-histidine biosynthesis; L-histidine from 5-phospho-alpha-D-ribose 1-diphosphate: step 5/9.</text>
</comment>
<comment type="subunit">
    <text evidence="1">Heterodimer of HisH and HisF.</text>
</comment>
<comment type="subcellular location">
    <subcellularLocation>
        <location evidence="1">Cytoplasm</location>
    </subcellularLocation>
</comment>
<accession>O66943</accession>
<keyword id="KW-0028">Amino-acid biosynthesis</keyword>
<keyword id="KW-0963">Cytoplasm</keyword>
<keyword id="KW-0315">Glutamine amidotransferase</keyword>
<keyword id="KW-0368">Histidine biosynthesis</keyword>
<keyword id="KW-0378">Hydrolase</keyword>
<keyword id="KW-0456">Lyase</keyword>
<keyword id="KW-1185">Reference proteome</keyword>
<dbReference type="EC" id="4.3.2.10"/>
<dbReference type="EC" id="3.5.1.2"/>
<dbReference type="EMBL" id="AE000657">
    <property type="protein sequence ID" value="AAC06901.1"/>
    <property type="molecule type" value="Genomic_DNA"/>
</dbReference>
<dbReference type="PIR" id="C70364">
    <property type="entry name" value="C70364"/>
</dbReference>
<dbReference type="RefSeq" id="NP_213503.1">
    <property type="nucleotide sequence ID" value="NC_000918.1"/>
</dbReference>
<dbReference type="RefSeq" id="WP_010880441.1">
    <property type="nucleotide sequence ID" value="NC_000918.1"/>
</dbReference>
<dbReference type="SMR" id="O66943"/>
<dbReference type="FunCoup" id="O66943">
    <property type="interactions" value="255"/>
</dbReference>
<dbReference type="STRING" id="224324.aq_732"/>
<dbReference type="MEROPS" id="C26.965"/>
<dbReference type="EnsemblBacteria" id="AAC06901">
    <property type="protein sequence ID" value="AAC06901"/>
    <property type="gene ID" value="aq_732"/>
</dbReference>
<dbReference type="KEGG" id="aae:aq_732"/>
<dbReference type="PATRIC" id="fig|224324.8.peg.586"/>
<dbReference type="eggNOG" id="COG0118">
    <property type="taxonomic scope" value="Bacteria"/>
</dbReference>
<dbReference type="HOGENOM" id="CLU_071837_2_2_0"/>
<dbReference type="InParanoid" id="O66943"/>
<dbReference type="OrthoDB" id="9807137at2"/>
<dbReference type="UniPathway" id="UPA00031">
    <property type="reaction ID" value="UER00010"/>
</dbReference>
<dbReference type="Proteomes" id="UP000000798">
    <property type="component" value="Chromosome"/>
</dbReference>
<dbReference type="GO" id="GO:0005737">
    <property type="term" value="C:cytoplasm"/>
    <property type="evidence" value="ECO:0007669"/>
    <property type="project" value="UniProtKB-SubCell"/>
</dbReference>
<dbReference type="GO" id="GO:0004359">
    <property type="term" value="F:glutaminase activity"/>
    <property type="evidence" value="ECO:0007669"/>
    <property type="project" value="UniProtKB-EC"/>
</dbReference>
<dbReference type="GO" id="GO:0000107">
    <property type="term" value="F:imidazoleglycerol-phosphate synthase activity"/>
    <property type="evidence" value="ECO:0000318"/>
    <property type="project" value="GO_Central"/>
</dbReference>
<dbReference type="GO" id="GO:0016829">
    <property type="term" value="F:lyase activity"/>
    <property type="evidence" value="ECO:0007669"/>
    <property type="project" value="UniProtKB-KW"/>
</dbReference>
<dbReference type="GO" id="GO:0000105">
    <property type="term" value="P:L-histidine biosynthetic process"/>
    <property type="evidence" value="ECO:0007669"/>
    <property type="project" value="UniProtKB-UniRule"/>
</dbReference>
<dbReference type="CDD" id="cd01748">
    <property type="entry name" value="GATase1_IGP_Synthase"/>
    <property type="match status" value="1"/>
</dbReference>
<dbReference type="FunFam" id="3.40.50.880:FF:000009">
    <property type="entry name" value="Imidazole glycerol phosphate synthase subunit HisH"/>
    <property type="match status" value="1"/>
</dbReference>
<dbReference type="Gene3D" id="3.40.50.880">
    <property type="match status" value="1"/>
</dbReference>
<dbReference type="HAMAP" id="MF_00278">
    <property type="entry name" value="HisH"/>
    <property type="match status" value="1"/>
</dbReference>
<dbReference type="InterPro" id="IPR029062">
    <property type="entry name" value="Class_I_gatase-like"/>
</dbReference>
<dbReference type="InterPro" id="IPR017926">
    <property type="entry name" value="GATASE"/>
</dbReference>
<dbReference type="InterPro" id="IPR010139">
    <property type="entry name" value="Imidazole-glycPsynth_HisH"/>
</dbReference>
<dbReference type="NCBIfam" id="TIGR01855">
    <property type="entry name" value="IMP_synth_hisH"/>
    <property type="match status" value="1"/>
</dbReference>
<dbReference type="PANTHER" id="PTHR42701">
    <property type="entry name" value="IMIDAZOLE GLYCEROL PHOSPHATE SYNTHASE SUBUNIT HISH"/>
    <property type="match status" value="1"/>
</dbReference>
<dbReference type="PANTHER" id="PTHR42701:SF1">
    <property type="entry name" value="IMIDAZOLE GLYCEROL PHOSPHATE SYNTHASE SUBUNIT HISH"/>
    <property type="match status" value="1"/>
</dbReference>
<dbReference type="Pfam" id="PF00117">
    <property type="entry name" value="GATase"/>
    <property type="match status" value="1"/>
</dbReference>
<dbReference type="PIRSF" id="PIRSF000495">
    <property type="entry name" value="Amidotransf_hisH"/>
    <property type="match status" value="1"/>
</dbReference>
<dbReference type="SUPFAM" id="SSF52317">
    <property type="entry name" value="Class I glutamine amidotransferase-like"/>
    <property type="match status" value="1"/>
</dbReference>
<dbReference type="PROSITE" id="PS51273">
    <property type="entry name" value="GATASE_TYPE_1"/>
    <property type="match status" value="1"/>
</dbReference>
<proteinExistence type="inferred from homology"/>
<organism>
    <name type="scientific">Aquifex aeolicus (strain VF5)</name>
    <dbReference type="NCBI Taxonomy" id="224324"/>
    <lineage>
        <taxon>Bacteria</taxon>
        <taxon>Pseudomonadati</taxon>
        <taxon>Aquificota</taxon>
        <taxon>Aquificia</taxon>
        <taxon>Aquificales</taxon>
        <taxon>Aquificaceae</taxon>
        <taxon>Aquifex</taxon>
    </lineage>
</organism>
<name>HIS5_AQUAE</name>